<gene>
    <name type="primary">nifH</name>
    <name type="ordered locus">cce_0559</name>
</gene>
<organism>
    <name type="scientific">Crocosphaera subtropica (strain ATCC 51142 / BH68)</name>
    <name type="common">Cyanothece sp. (strain ATCC 51142)</name>
    <dbReference type="NCBI Taxonomy" id="43989"/>
    <lineage>
        <taxon>Bacteria</taxon>
        <taxon>Bacillati</taxon>
        <taxon>Cyanobacteriota</taxon>
        <taxon>Cyanophyceae</taxon>
        <taxon>Oscillatoriophycideae</taxon>
        <taxon>Chroococcales</taxon>
        <taxon>Aphanothecaceae</taxon>
        <taxon>Crocosphaera</taxon>
        <taxon>Crocosphaera subtropica</taxon>
    </lineage>
</organism>
<protein>
    <recommendedName>
        <fullName>Nitrogenase iron protein</fullName>
        <ecNumber>1.18.6.1</ecNumber>
    </recommendedName>
    <alternativeName>
        <fullName>Nitrogenase Fe protein</fullName>
    </alternativeName>
    <alternativeName>
        <fullName>Nitrogenase component II</fullName>
    </alternativeName>
    <alternativeName>
        <fullName>Nitrogenase reductase</fullName>
    </alternativeName>
</protein>
<name>NIFH_CROS5</name>
<dbReference type="EC" id="1.18.6.1"/>
<dbReference type="EMBL" id="AF003336">
    <property type="protein sequence ID" value="AAB61408.1"/>
    <property type="molecule type" value="Genomic_DNA"/>
</dbReference>
<dbReference type="EMBL" id="CP000806">
    <property type="protein sequence ID" value="ACB49910.1"/>
    <property type="molecule type" value="Genomic_DNA"/>
</dbReference>
<dbReference type="RefSeq" id="WP_009546639.1">
    <property type="nucleotide sequence ID" value="NC_010546.1"/>
</dbReference>
<dbReference type="SMR" id="O07641"/>
<dbReference type="STRING" id="43989.cce_0559"/>
<dbReference type="KEGG" id="cyt:cce_0559"/>
<dbReference type="eggNOG" id="COG1348">
    <property type="taxonomic scope" value="Bacteria"/>
</dbReference>
<dbReference type="HOGENOM" id="CLU_059373_0_0_3"/>
<dbReference type="OrthoDB" id="9778641at2"/>
<dbReference type="Proteomes" id="UP000001203">
    <property type="component" value="Chromosome circular"/>
</dbReference>
<dbReference type="GO" id="GO:0051539">
    <property type="term" value="F:4 iron, 4 sulfur cluster binding"/>
    <property type="evidence" value="ECO:0007669"/>
    <property type="project" value="UniProtKB-KW"/>
</dbReference>
<dbReference type="GO" id="GO:0005524">
    <property type="term" value="F:ATP binding"/>
    <property type="evidence" value="ECO:0007669"/>
    <property type="project" value="UniProtKB-UniRule"/>
</dbReference>
<dbReference type="GO" id="GO:0046872">
    <property type="term" value="F:metal ion binding"/>
    <property type="evidence" value="ECO:0007669"/>
    <property type="project" value="UniProtKB-KW"/>
</dbReference>
<dbReference type="GO" id="GO:0016163">
    <property type="term" value="F:nitrogenase activity"/>
    <property type="evidence" value="ECO:0007669"/>
    <property type="project" value="UniProtKB-UniRule"/>
</dbReference>
<dbReference type="GO" id="GO:0009399">
    <property type="term" value="P:nitrogen fixation"/>
    <property type="evidence" value="ECO:0007669"/>
    <property type="project" value="UniProtKB-UniRule"/>
</dbReference>
<dbReference type="CDD" id="cd02040">
    <property type="entry name" value="NifH"/>
    <property type="match status" value="1"/>
</dbReference>
<dbReference type="FunFam" id="3.40.50.300:FF:001379">
    <property type="entry name" value="Nitrogenase iron protein 1"/>
    <property type="match status" value="1"/>
</dbReference>
<dbReference type="Gene3D" id="3.40.50.300">
    <property type="entry name" value="P-loop containing nucleotide triphosphate hydrolases"/>
    <property type="match status" value="1"/>
</dbReference>
<dbReference type="HAMAP" id="MF_00533">
    <property type="entry name" value="NifH"/>
    <property type="match status" value="1"/>
</dbReference>
<dbReference type="InterPro" id="IPR030655">
    <property type="entry name" value="NifH/chlL_CS"/>
</dbReference>
<dbReference type="InterPro" id="IPR000392">
    <property type="entry name" value="NifH/frxC"/>
</dbReference>
<dbReference type="InterPro" id="IPR005977">
    <property type="entry name" value="Nitrogenase_Fe_NifH"/>
</dbReference>
<dbReference type="InterPro" id="IPR027417">
    <property type="entry name" value="P-loop_NTPase"/>
</dbReference>
<dbReference type="NCBIfam" id="TIGR01287">
    <property type="entry name" value="nifH"/>
    <property type="match status" value="1"/>
</dbReference>
<dbReference type="PANTHER" id="PTHR42864">
    <property type="entry name" value="LIGHT-INDEPENDENT PROTOCHLOROPHYLLIDE REDUCTASE IRON-SULFUR ATP-BINDING PROTEIN"/>
    <property type="match status" value="1"/>
</dbReference>
<dbReference type="PANTHER" id="PTHR42864:SF2">
    <property type="entry name" value="LIGHT-INDEPENDENT PROTOCHLOROPHYLLIDE REDUCTASE IRON-SULFUR ATP-BINDING PROTEIN"/>
    <property type="match status" value="1"/>
</dbReference>
<dbReference type="Pfam" id="PF00142">
    <property type="entry name" value="Fer4_NifH"/>
    <property type="match status" value="1"/>
</dbReference>
<dbReference type="PIRSF" id="PIRSF000363">
    <property type="entry name" value="Nitrogenase_iron"/>
    <property type="match status" value="1"/>
</dbReference>
<dbReference type="PRINTS" id="PR00091">
    <property type="entry name" value="NITROGNASEII"/>
</dbReference>
<dbReference type="SUPFAM" id="SSF52540">
    <property type="entry name" value="P-loop containing nucleoside triphosphate hydrolases"/>
    <property type="match status" value="1"/>
</dbReference>
<dbReference type="PROSITE" id="PS00746">
    <property type="entry name" value="NIFH_FRXC_1"/>
    <property type="match status" value="1"/>
</dbReference>
<dbReference type="PROSITE" id="PS00692">
    <property type="entry name" value="NIFH_FRXC_2"/>
    <property type="match status" value="1"/>
</dbReference>
<dbReference type="PROSITE" id="PS51026">
    <property type="entry name" value="NIFH_FRXC_3"/>
    <property type="match status" value="1"/>
</dbReference>
<proteinExistence type="inferred from homology"/>
<evidence type="ECO:0000250" key="1"/>
<evidence type="ECO:0000255" key="2"/>
<evidence type="ECO:0000305" key="3"/>
<keyword id="KW-0004">4Fe-4S</keyword>
<keyword id="KW-0013">ADP-ribosylation</keyword>
<keyword id="KW-0067">ATP-binding</keyword>
<keyword id="KW-0408">Iron</keyword>
<keyword id="KW-0411">Iron-sulfur</keyword>
<keyword id="KW-0479">Metal-binding</keyword>
<keyword id="KW-0535">Nitrogen fixation</keyword>
<keyword id="KW-0547">Nucleotide-binding</keyword>
<keyword id="KW-0560">Oxidoreductase</keyword>
<keyword id="KW-1185">Reference proteome</keyword>
<comment type="function">
    <text evidence="1">The key enzymatic reactions in nitrogen fixation are catalyzed by the nitrogenase complex, which has 2 components: the iron protein and the molybdenum-iron protein.</text>
</comment>
<comment type="catalytic activity">
    <reaction>
        <text>N2 + 8 reduced [2Fe-2S]-[ferredoxin] + 16 ATP + 16 H2O = H2 + 8 oxidized [2Fe-2S]-[ferredoxin] + 2 NH4(+) + 16 ADP + 16 phosphate + 6 H(+)</text>
        <dbReference type="Rhea" id="RHEA:21448"/>
        <dbReference type="Rhea" id="RHEA-COMP:10000"/>
        <dbReference type="Rhea" id="RHEA-COMP:10001"/>
        <dbReference type="ChEBI" id="CHEBI:15377"/>
        <dbReference type="ChEBI" id="CHEBI:15378"/>
        <dbReference type="ChEBI" id="CHEBI:17997"/>
        <dbReference type="ChEBI" id="CHEBI:18276"/>
        <dbReference type="ChEBI" id="CHEBI:28938"/>
        <dbReference type="ChEBI" id="CHEBI:30616"/>
        <dbReference type="ChEBI" id="CHEBI:33737"/>
        <dbReference type="ChEBI" id="CHEBI:33738"/>
        <dbReference type="ChEBI" id="CHEBI:43474"/>
        <dbReference type="ChEBI" id="CHEBI:456216"/>
        <dbReference type="EC" id="1.18.6.1"/>
    </reaction>
</comment>
<comment type="cofactor">
    <cofactor evidence="1">
        <name>[4Fe-4S] cluster</name>
        <dbReference type="ChEBI" id="CHEBI:49883"/>
    </cofactor>
    <text evidence="1">Binds 1 [4Fe-4S] cluster per dimer.</text>
</comment>
<comment type="subunit">
    <text evidence="1">Homodimer.</text>
</comment>
<comment type="PTM">
    <text evidence="1">The reversible ADP-ribosylation of Arg-135 inactivates the nitrogenase reductase and regulates nitrogenase activity.</text>
</comment>
<comment type="similarity">
    <text evidence="3">Belongs to the NifH/BchL/ChlL family.</text>
</comment>
<accession>O07641</accession>
<accession>B1WPC8</accession>
<feature type="chain" id="PRO_0000139504" description="Nitrogenase iron protein">
    <location>
        <begin position="1"/>
        <end position="327"/>
    </location>
</feature>
<feature type="region of interest" description="PEST-like; not found in other NifH">
    <location>
        <begin position="1"/>
        <end position="37"/>
    </location>
</feature>
<feature type="binding site" evidence="2">
    <location>
        <begin position="45"/>
        <end position="52"/>
    </location>
    <ligand>
        <name>ATP</name>
        <dbReference type="ChEBI" id="CHEBI:30616"/>
    </ligand>
</feature>
<feature type="binding site" evidence="1">
    <location>
        <position position="132"/>
    </location>
    <ligand>
        <name>[4Fe-4S] cluster</name>
        <dbReference type="ChEBI" id="CHEBI:49883"/>
        <note>ligand shared between dimeric partners</note>
    </ligand>
</feature>
<feature type="binding site" evidence="1">
    <location>
        <position position="166"/>
    </location>
    <ligand>
        <name>[4Fe-4S] cluster</name>
        <dbReference type="ChEBI" id="CHEBI:49883"/>
        <note>ligand shared between dimeric partners</note>
    </ligand>
</feature>
<feature type="modified residue" description="ADP-ribosylarginine; by dinitrogenase reductase ADP-ribosyltransferase" evidence="1">
    <location>
        <position position="135"/>
    </location>
</feature>
<sequence>MGRNSQGFLTTIRIIVTSATDQPSNFIHSLSNKRESTMRQIAFYGKGGIGKSTTSQNTIAALAETNRIMIVGCDPKADSTRLMLHTKAQTTILHLAAERGTVEDIELEEVLLEGYQGVKCVESGGPEPGVGCAGRGIITAINFLEEEGAYEDLDFVSYDVLGDVVCGGFAMPIREGKAQEIYIVTSGEMMAMYAANNIARGILKYAHTGGVRLGGLICNSRNVNCEAELIEELARRLGTQMIHFVPRSKQVQEAELRRMTVIEYSPDHPQAQEYRELSRKIENNTNLVIPTPITMEELEELLVDFGILGGEDEYEKALQADKAATKA</sequence>
<reference key="1">
    <citation type="journal article" date="1999" name="Biochim. Biophys. Acta">
        <title>Analysis of the nifHDK operon and structure of the NifH protein from the unicellular, diazotrophic cyanobacterium, Cyanothece strain sp. ATCC 51142.</title>
        <authorList>
            <person name="Colon-Lopez M.S."/>
            <person name="Tang H.-Y."/>
            <person name="Tucker D.L."/>
            <person name="Sherman L.A."/>
        </authorList>
    </citation>
    <scope>NUCLEOTIDE SEQUENCE [GENOMIC DNA]</scope>
</reference>
<reference key="2">
    <citation type="journal article" date="2008" name="Proc. Natl. Acad. Sci. U.S.A.">
        <title>The genome of Cyanothece 51142, a unicellular diazotrophic cyanobacterium important in the marine nitrogen cycle.</title>
        <authorList>
            <person name="Welsh E.A."/>
            <person name="Liberton M."/>
            <person name="Stoeckel J."/>
            <person name="Loh T."/>
            <person name="Elvitigala T."/>
            <person name="Wang C."/>
            <person name="Wollam A."/>
            <person name="Fulton R.S."/>
            <person name="Clifton S.W."/>
            <person name="Jacobs J.M."/>
            <person name="Aurora R."/>
            <person name="Ghosh B.K."/>
            <person name="Sherman L.A."/>
            <person name="Smith R.D."/>
            <person name="Wilson R.K."/>
            <person name="Pakrasi H.B."/>
        </authorList>
    </citation>
    <scope>NUCLEOTIDE SEQUENCE [LARGE SCALE GENOMIC DNA]</scope>
    <source>
        <strain>ATCC 51142 / BH68</strain>
    </source>
</reference>